<protein>
    <recommendedName>
        <fullName>Zinc finger transcription factor YRM1</fullName>
    </recommendedName>
    <alternativeName>
        <fullName>Reveromycin resistance modulator 1</fullName>
    </alternativeName>
</protein>
<name>YRM1_YEAST</name>
<proteinExistence type="evidence at protein level"/>
<accession>Q12340</accession>
<accession>D6W2M8</accession>
<accession>E9PAH0</accession>
<accession>Q6B2M3</accession>
<feature type="chain" id="PRO_0000269650" description="Zinc finger transcription factor YRM1">
    <location>
        <begin position="1"/>
        <end position="786"/>
    </location>
</feature>
<feature type="DNA-binding region" description="Zn(2)-C6 fungal-type" evidence="1">
    <location>
        <begin position="31"/>
        <end position="59"/>
    </location>
</feature>
<feature type="region of interest" description="Disordered" evidence="2">
    <location>
        <begin position="1"/>
        <end position="25"/>
    </location>
</feature>
<feature type="region of interest" description="Disordered" evidence="2">
    <location>
        <begin position="721"/>
        <end position="747"/>
    </location>
</feature>
<feature type="compositionally biased region" description="Polar residues" evidence="2">
    <location>
        <begin position="737"/>
        <end position="747"/>
    </location>
</feature>
<feature type="sequence conflict" description="In Ref. 4; AAT92726." evidence="7" ref="4">
    <original>K</original>
    <variation>Q</variation>
    <location>
        <position position="158"/>
    </location>
</feature>
<feature type="sequence conflict" description="In Ref. 4; AAT92726." evidence="7" ref="4">
    <original>D</original>
    <variation>G</variation>
    <location>
        <position position="604"/>
    </location>
</feature>
<evidence type="ECO:0000255" key="1">
    <source>
        <dbReference type="PROSITE-ProRule" id="PRU00227"/>
    </source>
</evidence>
<evidence type="ECO:0000256" key="2">
    <source>
        <dbReference type="SAM" id="MobiDB-lite"/>
    </source>
</evidence>
<evidence type="ECO:0000269" key="3">
    <source>
    </source>
</evidence>
<evidence type="ECO:0000269" key="4">
    <source>
    </source>
</evidence>
<evidence type="ECO:0000269" key="5">
    <source>
    </source>
</evidence>
<evidence type="ECO:0000269" key="6">
    <source>
    </source>
</evidence>
<evidence type="ECO:0000305" key="7"/>
<reference key="1">
    <citation type="journal article" date="1996" name="Yeast">
        <title>Analysis of a 22,956 bp region on the right arm of Saccharomyces cerevisiae chromosome XV.</title>
        <authorList>
            <person name="Madania A."/>
            <person name="Poch O."/>
            <person name="Tarassov I.A."/>
            <person name="Winsor B."/>
            <person name="Martin R.P."/>
        </authorList>
    </citation>
    <scope>NUCLEOTIDE SEQUENCE [GENOMIC DNA]</scope>
    <source>
        <strain>ATCC 96604 / S288c / FY1679</strain>
    </source>
</reference>
<reference key="2">
    <citation type="journal article" date="1997" name="Nature">
        <title>The nucleotide sequence of Saccharomyces cerevisiae chromosome XV.</title>
        <authorList>
            <person name="Dujon B."/>
            <person name="Albermann K."/>
            <person name="Aldea M."/>
            <person name="Alexandraki D."/>
            <person name="Ansorge W."/>
            <person name="Arino J."/>
            <person name="Benes V."/>
            <person name="Bohn C."/>
            <person name="Bolotin-Fukuhara M."/>
            <person name="Bordonne R."/>
            <person name="Boyer J."/>
            <person name="Camasses A."/>
            <person name="Casamayor A."/>
            <person name="Casas C."/>
            <person name="Cheret G."/>
            <person name="Cziepluch C."/>
            <person name="Daignan-Fornier B."/>
            <person name="Dang V.-D."/>
            <person name="de Haan M."/>
            <person name="Delius H."/>
            <person name="Durand P."/>
            <person name="Fairhead C."/>
            <person name="Feldmann H."/>
            <person name="Gaillon L."/>
            <person name="Galisson F."/>
            <person name="Gamo F.-J."/>
            <person name="Gancedo C."/>
            <person name="Goffeau A."/>
            <person name="Goulding S.E."/>
            <person name="Grivell L.A."/>
            <person name="Habbig B."/>
            <person name="Hand N.J."/>
            <person name="Hani J."/>
            <person name="Hattenhorst U."/>
            <person name="Hebling U."/>
            <person name="Hernando Y."/>
            <person name="Herrero E."/>
            <person name="Heumann K."/>
            <person name="Hiesel R."/>
            <person name="Hilger F."/>
            <person name="Hofmann B."/>
            <person name="Hollenberg C.P."/>
            <person name="Hughes B."/>
            <person name="Jauniaux J.-C."/>
            <person name="Kalogeropoulos A."/>
            <person name="Katsoulou C."/>
            <person name="Kordes E."/>
            <person name="Lafuente M.J."/>
            <person name="Landt O."/>
            <person name="Louis E.J."/>
            <person name="Maarse A.C."/>
            <person name="Madania A."/>
            <person name="Mannhaupt G."/>
            <person name="Marck C."/>
            <person name="Martin R.P."/>
            <person name="Mewes H.-W."/>
            <person name="Michaux G."/>
            <person name="Paces V."/>
            <person name="Parle-McDermott A.G."/>
            <person name="Pearson B.M."/>
            <person name="Perrin A."/>
            <person name="Pettersson B."/>
            <person name="Poch O."/>
            <person name="Pohl T.M."/>
            <person name="Poirey R."/>
            <person name="Portetelle D."/>
            <person name="Pujol A."/>
            <person name="Purnelle B."/>
            <person name="Ramezani Rad M."/>
            <person name="Rechmann S."/>
            <person name="Schwager C."/>
            <person name="Schweizer M."/>
            <person name="Sor F."/>
            <person name="Sterky F."/>
            <person name="Tarassov I.A."/>
            <person name="Teodoru C."/>
            <person name="Tettelin H."/>
            <person name="Thierry A."/>
            <person name="Tobiasch E."/>
            <person name="Tzermia M."/>
            <person name="Uhlen M."/>
            <person name="Unseld M."/>
            <person name="Valens M."/>
            <person name="Vandenbol M."/>
            <person name="Vetter I."/>
            <person name="Vlcek C."/>
            <person name="Voet M."/>
            <person name="Volckaert G."/>
            <person name="Voss H."/>
            <person name="Wambutt R."/>
            <person name="Wedler H."/>
            <person name="Wiemann S."/>
            <person name="Winsor B."/>
            <person name="Wolfe K.H."/>
            <person name="Zollner A."/>
            <person name="Zumstein E."/>
            <person name="Kleine K."/>
        </authorList>
    </citation>
    <scope>NUCLEOTIDE SEQUENCE [LARGE SCALE GENOMIC DNA]</scope>
    <source>
        <strain>ATCC 204508 / S288c</strain>
    </source>
</reference>
<reference key="3">
    <citation type="journal article" date="2014" name="G3 (Bethesda)">
        <title>The reference genome sequence of Saccharomyces cerevisiae: Then and now.</title>
        <authorList>
            <person name="Engel S.R."/>
            <person name="Dietrich F.S."/>
            <person name="Fisk D.G."/>
            <person name="Binkley G."/>
            <person name="Balakrishnan R."/>
            <person name="Costanzo M.C."/>
            <person name="Dwight S.S."/>
            <person name="Hitz B.C."/>
            <person name="Karra K."/>
            <person name="Nash R.S."/>
            <person name="Weng S."/>
            <person name="Wong E.D."/>
            <person name="Lloyd P."/>
            <person name="Skrzypek M.S."/>
            <person name="Miyasato S.R."/>
            <person name="Simison M."/>
            <person name="Cherry J.M."/>
        </authorList>
    </citation>
    <scope>GENOME REANNOTATION</scope>
    <source>
        <strain>ATCC 204508 / S288c</strain>
    </source>
</reference>
<reference key="4">
    <citation type="journal article" date="2007" name="Genome Res.">
        <title>Approaching a complete repository of sequence-verified protein-encoding clones for Saccharomyces cerevisiae.</title>
        <authorList>
            <person name="Hu Y."/>
            <person name="Rolfs A."/>
            <person name="Bhullar B."/>
            <person name="Murthy T.V.S."/>
            <person name="Zhu C."/>
            <person name="Berger M.F."/>
            <person name="Camargo A.A."/>
            <person name="Kelley F."/>
            <person name="McCarron S."/>
            <person name="Jepson D."/>
            <person name="Richardson A."/>
            <person name="Raphael J."/>
            <person name="Moreira D."/>
            <person name="Taycher E."/>
            <person name="Zuo D."/>
            <person name="Mohr S."/>
            <person name="Kane M.F."/>
            <person name="Williamson J."/>
            <person name="Simpson A.J.G."/>
            <person name="Bulyk M.L."/>
            <person name="Harlow E."/>
            <person name="Marsischky G."/>
            <person name="Kolodner R.D."/>
            <person name="LaBaer J."/>
        </authorList>
    </citation>
    <scope>NUCLEOTIDE SEQUENCE [GENOMIC DNA]</scope>
    <source>
        <strain>ATCC 204508 / S288c</strain>
    </source>
</reference>
<reference key="5">
    <citation type="journal article" date="2003" name="J. Biol. Chem.">
        <title>Competitive promoter occupancy by two yeast paralogous transcription factors controlling the multidrug resistance phenomenon.</title>
        <authorList>
            <person name="Lucau-Danila A."/>
            <person name="Delaveau T."/>
            <person name="Lelandais G."/>
            <person name="Devaux F."/>
            <person name="Jacq C."/>
        </authorList>
    </citation>
    <scope>FUNCTION</scope>
</reference>
<reference key="6">
    <citation type="journal article" date="2003" name="Nature">
        <title>Global analysis of protein localization in budding yeast.</title>
        <authorList>
            <person name="Huh W.-K."/>
            <person name="Falvo J.V."/>
            <person name="Gerke L.C."/>
            <person name="Carroll A.S."/>
            <person name="Howson R.W."/>
            <person name="Weissman J.S."/>
            <person name="O'Shea E.K."/>
        </authorList>
    </citation>
    <scope>SUBCELLULAR LOCATION [LARGE SCALE ANALYSIS]</scope>
</reference>
<reference key="7">
    <citation type="journal article" date="2003" name="Nature">
        <title>Global analysis of protein expression in yeast.</title>
        <authorList>
            <person name="Ghaemmaghami S."/>
            <person name="Huh W.-K."/>
            <person name="Bower K."/>
            <person name="Howson R.W."/>
            <person name="Belle A."/>
            <person name="Dephoure N."/>
            <person name="O'Shea E.K."/>
            <person name="Weissman J.S."/>
        </authorList>
    </citation>
    <scope>LEVEL OF PROTEIN EXPRESSION [LARGE SCALE ANALYSIS]</scope>
</reference>
<reference key="8">
    <citation type="journal article" date="2004" name="Gene">
        <title>Analysis of gene network regulating yeast multidrug resistance by artificial activation of transcription factors: involvement of Pdr3 in salt tolerance.</title>
        <authorList>
            <person name="Onda M."/>
            <person name="Ota K."/>
            <person name="Chiba T."/>
            <person name="Sakaki Y."/>
            <person name="Ito T."/>
        </authorList>
    </citation>
    <scope>FUNCTION</scope>
</reference>
<comment type="function">
    <text evidence="3 6">Transcription factor involved in the regulation of multidrug resistance genes. Acts in concert with YRR1.</text>
</comment>
<comment type="subcellular location">
    <subcellularLocation>
        <location evidence="4">Cytoplasm</location>
    </subcellularLocation>
    <subcellularLocation>
        <location evidence="1 4">Nucleus</location>
    </subcellularLocation>
</comment>
<comment type="miscellaneous">
    <text evidence="5">Present with 125 molecules/cell in log phase SD medium.</text>
</comment>
<keyword id="KW-0010">Activator</keyword>
<keyword id="KW-0963">Cytoplasm</keyword>
<keyword id="KW-0238">DNA-binding</keyword>
<keyword id="KW-0479">Metal-binding</keyword>
<keyword id="KW-0539">Nucleus</keyword>
<keyword id="KW-1185">Reference proteome</keyword>
<keyword id="KW-0804">Transcription</keyword>
<keyword id="KW-0805">Transcription regulation</keyword>
<keyword id="KW-0862">Zinc</keyword>
<dbReference type="EMBL" id="U55021">
    <property type="protein sequence ID" value="AAB47417.1"/>
    <property type="molecule type" value="Genomic_DNA"/>
</dbReference>
<dbReference type="EMBL" id="Z75080">
    <property type="protein sequence ID" value="CAA99380.1"/>
    <property type="molecule type" value="Genomic_DNA"/>
</dbReference>
<dbReference type="EMBL" id="Z75081">
    <property type="protein sequence ID" value="CAA99382.1"/>
    <property type="molecule type" value="Genomic_DNA"/>
</dbReference>
<dbReference type="EMBL" id="AY692707">
    <property type="protein sequence ID" value="AAT92726.1"/>
    <property type="molecule type" value="Genomic_DNA"/>
</dbReference>
<dbReference type="EMBL" id="BK006948">
    <property type="protein sequence ID" value="DAA10944.1"/>
    <property type="molecule type" value="Genomic_DNA"/>
</dbReference>
<dbReference type="PIR" id="S67060">
    <property type="entry name" value="S67060"/>
</dbReference>
<dbReference type="RefSeq" id="NP_014815.3">
    <property type="nucleotide sequence ID" value="NM_001183591.3"/>
</dbReference>
<dbReference type="BioGRID" id="34566">
    <property type="interactions" value="39"/>
</dbReference>
<dbReference type="DIP" id="DIP-4118N"/>
<dbReference type="FunCoup" id="Q12340">
    <property type="interactions" value="98"/>
</dbReference>
<dbReference type="IntAct" id="Q12340">
    <property type="interactions" value="1"/>
</dbReference>
<dbReference type="MINT" id="Q12340"/>
<dbReference type="STRING" id="4932.YOR172W"/>
<dbReference type="iPTMnet" id="Q12340"/>
<dbReference type="PaxDb" id="4932-YOR172W"/>
<dbReference type="PeptideAtlas" id="Q12340"/>
<dbReference type="EnsemblFungi" id="YOR172W_mRNA">
    <property type="protein sequence ID" value="YOR172W"/>
    <property type="gene ID" value="YOR172W"/>
</dbReference>
<dbReference type="GeneID" id="854343"/>
<dbReference type="KEGG" id="sce:YOR172W"/>
<dbReference type="AGR" id="SGD:S000005698"/>
<dbReference type="SGD" id="S000005698">
    <property type="gene designation" value="YRM1"/>
</dbReference>
<dbReference type="VEuPathDB" id="FungiDB:YOR172W"/>
<dbReference type="eggNOG" id="ENOG502SJDI">
    <property type="taxonomic scope" value="Eukaryota"/>
</dbReference>
<dbReference type="GeneTree" id="ENSGT00940000176356"/>
<dbReference type="HOGENOM" id="CLU_010594_0_0_1"/>
<dbReference type="InParanoid" id="Q12340"/>
<dbReference type="OMA" id="LENLWVW"/>
<dbReference type="OrthoDB" id="4356994at2759"/>
<dbReference type="BioCyc" id="YEAST:G3O-33685-MONOMER"/>
<dbReference type="BioGRID-ORCS" id="854343">
    <property type="hits" value="4 hits in 13 CRISPR screens"/>
</dbReference>
<dbReference type="PRO" id="PR:Q12340"/>
<dbReference type="Proteomes" id="UP000002311">
    <property type="component" value="Chromosome XV"/>
</dbReference>
<dbReference type="RNAct" id="Q12340">
    <property type="molecule type" value="protein"/>
</dbReference>
<dbReference type="GO" id="GO:0005737">
    <property type="term" value="C:cytoplasm"/>
    <property type="evidence" value="ECO:0007005"/>
    <property type="project" value="SGD"/>
</dbReference>
<dbReference type="GO" id="GO:0005634">
    <property type="term" value="C:nucleus"/>
    <property type="evidence" value="ECO:0007005"/>
    <property type="project" value="SGD"/>
</dbReference>
<dbReference type="GO" id="GO:0003677">
    <property type="term" value="F:DNA binding"/>
    <property type="evidence" value="ECO:0007669"/>
    <property type="project" value="UniProtKB-KW"/>
</dbReference>
<dbReference type="GO" id="GO:0000981">
    <property type="term" value="F:DNA-binding transcription factor activity, RNA polymerase II-specific"/>
    <property type="evidence" value="ECO:0000314"/>
    <property type="project" value="SGD"/>
</dbReference>
<dbReference type="GO" id="GO:0008270">
    <property type="term" value="F:zinc ion binding"/>
    <property type="evidence" value="ECO:0007669"/>
    <property type="project" value="InterPro"/>
</dbReference>
<dbReference type="GO" id="GO:0006357">
    <property type="term" value="P:regulation of transcription by RNA polymerase II"/>
    <property type="evidence" value="ECO:0000314"/>
    <property type="project" value="SGD"/>
</dbReference>
<dbReference type="CDD" id="cd12148">
    <property type="entry name" value="fungal_TF_MHR"/>
    <property type="match status" value="1"/>
</dbReference>
<dbReference type="CDD" id="cd00067">
    <property type="entry name" value="GAL4"/>
    <property type="match status" value="1"/>
</dbReference>
<dbReference type="Gene3D" id="4.10.240.10">
    <property type="entry name" value="Zn(2)-C6 fungal-type DNA-binding domain"/>
    <property type="match status" value="1"/>
</dbReference>
<dbReference type="InterPro" id="IPR052693">
    <property type="entry name" value="Yeast_MDR_Regulatory"/>
</dbReference>
<dbReference type="InterPro" id="IPR036864">
    <property type="entry name" value="Zn2-C6_fun-type_DNA-bd_sf"/>
</dbReference>
<dbReference type="InterPro" id="IPR001138">
    <property type="entry name" value="Zn2Cys6_DnaBD"/>
</dbReference>
<dbReference type="PANTHER" id="PTHR31405">
    <property type="entry name" value="TRANSCRIPTION FACTOR PDR8-RELATED"/>
    <property type="match status" value="1"/>
</dbReference>
<dbReference type="PANTHER" id="PTHR31405:SF8">
    <property type="entry name" value="TRANSCRIPTION FACTOR PDR8-RELATED"/>
    <property type="match status" value="1"/>
</dbReference>
<dbReference type="Pfam" id="PF00172">
    <property type="entry name" value="Zn_clus"/>
    <property type="match status" value="1"/>
</dbReference>
<dbReference type="SMART" id="SM00066">
    <property type="entry name" value="GAL4"/>
    <property type="match status" value="1"/>
</dbReference>
<dbReference type="SUPFAM" id="SSF57701">
    <property type="entry name" value="Zn2/Cys6 DNA-binding domain"/>
    <property type="match status" value="1"/>
</dbReference>
<dbReference type="PROSITE" id="PS00463">
    <property type="entry name" value="ZN2_CY6_FUNGAL_1"/>
    <property type="match status" value="1"/>
</dbReference>
<dbReference type="PROSITE" id="PS50048">
    <property type="entry name" value="ZN2_CY6_FUNGAL_2"/>
    <property type="match status" value="1"/>
</dbReference>
<gene>
    <name type="primary">YRM1</name>
    <name type="ordered locus">YOR172W</name>
    <name type="ORF">O3620</name>
</gene>
<organism>
    <name type="scientific">Saccharomyces cerevisiae (strain ATCC 204508 / S288c)</name>
    <name type="common">Baker's yeast</name>
    <dbReference type="NCBI Taxonomy" id="559292"/>
    <lineage>
        <taxon>Eukaryota</taxon>
        <taxon>Fungi</taxon>
        <taxon>Dikarya</taxon>
        <taxon>Ascomycota</taxon>
        <taxon>Saccharomycotina</taxon>
        <taxon>Saccharomycetes</taxon>
        <taxon>Saccharomycetales</taxon>
        <taxon>Saccharomycetaceae</taxon>
        <taxon>Saccharomyces</taxon>
    </lineage>
</organism>
<sequence>MSKRGSLQDRASPSEETVKKAQKRRKPIKSCAFCRKRKLRCDQQKPMCSTCKTRGRSGCLYTEKFTHKIETKELFGSTPNIELLKRIEDLEKRLDDKELTEKDVALSTSPFRNPYANFYYLQCKGSGRRIVYGPTSLRTHLSNDDNRFVNTYNQLWSKVKIERNRWKARHKWTMKPETQLLEGPPLEKTGSDILQQVCNVLPSFEQSSKIITDFFNTELETNEVSEVLDKTKIINDFTSSFLPSDELLPNGERRIEKLLPSTKKNYYKIGVILMILCIRHFYKNTPEEIEKFLIMLTGLSTAKVYFIERAQFLLLKYYHRELIWACGDDSHMISLVDLLCSTAIMLGLHLNIREIYKNQENIVGSMESLENLWVWIILSDFNVSLNIGRCLAINSSYFQVDECENGERLPKNTNNYSSTVFFDQSNSCMGKLKRFLRLARPMLDQIYDRSAFPDLAENCKKLRNFVETEFHPISYYTDSELISKVPLCEIKVLAQVLNLLLTFYSLRYLIYKEKSVVLENNILQTILVSFSLVINTTILCFNLDEKHFPEFFDHNCVHLPPFMALSLVYTNFLFPRASTGFCAFLYHKLTLFEKGYYLSSNIKDQEVTDWDLSTLNIPLDKAMNLLTAFKIHSDIFAKWSNDNNKQLRIIMARSYTFVINIALESIYRAVLEKVIKYRTEVENTWLQQLQDELNGSYSLTDNVNTPIDPSLSDLGVTSASPLAGNSPGLPPEEVRNNSENASHNNETGPIETELAQTISNEFWTAYNLGWEELMSQPDYKYLFDTQ</sequence>